<comment type="function">
    <text>Probably part of the binding-protein-dependent transport system YdhWXYZ for an amino acid; probably responsible for the translocation of the substrate across the membrane.</text>
</comment>
<comment type="subcellular location">
    <subcellularLocation>
        <location evidence="2">Cell inner membrane</location>
        <topology evidence="1">Multi-pass membrane protein</topology>
    </subcellularLocation>
</comment>
<comment type="similarity">
    <text evidence="2">Belongs to the binding-protein-dependent transport system permease family. HisMQ subfamily.</text>
</comment>
<comment type="sequence caution" evidence="2">
    <conflict type="frameshift">
        <sequence resource="EMBL-CDS" id="AAA58073"/>
    </conflict>
</comment>
<feature type="chain" id="PRO_0000060253" description="Putative amino-acid ABC transporter permease protein YhdX">
    <location>
        <begin position="1"/>
        <end position="393"/>
    </location>
</feature>
<feature type="transmembrane region" description="Helical" evidence="1">
    <location>
        <begin position="21"/>
        <end position="41"/>
    </location>
</feature>
<feature type="transmembrane region" description="Helical" evidence="1">
    <location>
        <begin position="92"/>
        <end position="112"/>
    </location>
</feature>
<feature type="transmembrane region" description="Helical" evidence="1">
    <location>
        <begin position="128"/>
        <end position="148"/>
    </location>
</feature>
<feature type="transmembrane region" description="Helical" evidence="1">
    <location>
        <begin position="180"/>
        <end position="200"/>
    </location>
</feature>
<feature type="transmembrane region" description="Helical" evidence="1">
    <location>
        <begin position="219"/>
        <end position="239"/>
    </location>
</feature>
<feature type="transmembrane region" description="Helical" evidence="1">
    <location>
        <begin position="256"/>
        <end position="276"/>
    </location>
</feature>
<feature type="transmembrane region" description="Helical" evidence="1">
    <location>
        <begin position="333"/>
        <end position="353"/>
    </location>
</feature>
<feature type="transmembrane region" description="Helical" evidence="1">
    <location>
        <begin position="363"/>
        <end position="383"/>
    </location>
</feature>
<feature type="domain" description="ABC transmembrane type-1" evidence="1">
    <location>
        <begin position="88"/>
        <end position="381"/>
    </location>
</feature>
<accession>P45767</accession>
<accession>Q2M8U6</accession>
<accession>Q6BF40</accession>
<gene>
    <name type="primary">yhdX</name>
    <name type="ordered locus">b3269</name>
    <name type="ordered locus">JW5544</name>
</gene>
<evidence type="ECO:0000255" key="1">
    <source>
        <dbReference type="PROSITE-ProRule" id="PRU00441"/>
    </source>
</evidence>
<evidence type="ECO:0000305" key="2"/>
<protein>
    <recommendedName>
        <fullName>Putative amino-acid ABC transporter permease protein YhdX</fullName>
    </recommendedName>
</protein>
<keyword id="KW-0029">Amino-acid transport</keyword>
<keyword id="KW-0997">Cell inner membrane</keyword>
<keyword id="KW-1003">Cell membrane</keyword>
<keyword id="KW-0472">Membrane</keyword>
<keyword id="KW-1185">Reference proteome</keyword>
<keyword id="KW-0812">Transmembrane</keyword>
<keyword id="KW-1133">Transmembrane helix</keyword>
<keyword id="KW-0813">Transport</keyword>
<name>YHDX_ECOLI</name>
<sequence>MSHRRSTVKGSLSFANPTVRAWLFQILAVVAVVGIVGWLFHNTVTNLNNRGITSGFAFLDRGAGFGIVQHLIDYQQGDTYGRVFIVGLLNTLLVSALCIVFASVLGFFIGLARLSDNWLLRKLSTIYIEIFRNIPPLLQIFFWYFAVLRNLPGPRQAVSAFDLAFLSNRGLYIPSPQLGDGFIAFILAVVMAIVLSVGLFRFNKTYQIKTGQLRRTWPIAAVLIIGLPLLAQWLFGAALHWDVPALRGFNFRGGMVLIPELAALTLALSVYTSAFIAEIIRAGIQAVPYGQHEAARSLGLPNPVTLRQVIIPQALRVIIPPLTSQYLNIVKNSSLAAAIGYPDMVSLFAGTVLNQTGQAIETIAMTMSVYLIISLTISLLMNIYNRRIAIVER</sequence>
<proteinExistence type="inferred from homology"/>
<organism>
    <name type="scientific">Escherichia coli (strain K12)</name>
    <dbReference type="NCBI Taxonomy" id="83333"/>
    <lineage>
        <taxon>Bacteria</taxon>
        <taxon>Pseudomonadati</taxon>
        <taxon>Pseudomonadota</taxon>
        <taxon>Gammaproteobacteria</taxon>
        <taxon>Enterobacterales</taxon>
        <taxon>Enterobacteriaceae</taxon>
        <taxon>Escherichia</taxon>
    </lineage>
</organism>
<dbReference type="EMBL" id="U18997">
    <property type="protein sequence ID" value="AAA58073.1"/>
    <property type="status" value="ALT_FRAME"/>
    <property type="molecule type" value="Genomic_DNA"/>
</dbReference>
<dbReference type="EMBL" id="U00096">
    <property type="protein sequence ID" value="AAT48174.1"/>
    <property type="molecule type" value="Genomic_DNA"/>
</dbReference>
<dbReference type="EMBL" id="AP009048">
    <property type="protein sequence ID" value="BAE77310.1"/>
    <property type="molecule type" value="Genomic_DNA"/>
</dbReference>
<dbReference type="RefSeq" id="WP_000019655.1">
    <property type="nucleotide sequence ID" value="NZ_STEB01000012.1"/>
</dbReference>
<dbReference type="RefSeq" id="YP_026209.1">
    <property type="nucleotide sequence ID" value="NC_000913.3"/>
</dbReference>
<dbReference type="SMR" id="P45767"/>
<dbReference type="BioGRID" id="4260867">
    <property type="interactions" value="5"/>
</dbReference>
<dbReference type="ComplexPortal" id="CPX-4450">
    <property type="entry name" value="Putative amino acid ABC transporter complex"/>
</dbReference>
<dbReference type="FunCoup" id="P45767">
    <property type="interactions" value="312"/>
</dbReference>
<dbReference type="STRING" id="511145.b3269"/>
<dbReference type="TCDB" id="3.A.1.3.26">
    <property type="family name" value="the atp-binding cassette (abc) superfamily"/>
</dbReference>
<dbReference type="PaxDb" id="511145-b3269"/>
<dbReference type="EnsemblBacteria" id="AAT48174">
    <property type="protein sequence ID" value="AAT48174"/>
    <property type="gene ID" value="b3269"/>
</dbReference>
<dbReference type="GeneID" id="947765"/>
<dbReference type="KEGG" id="ecj:JW5544"/>
<dbReference type="KEGG" id="eco:b3269"/>
<dbReference type="KEGG" id="ecoc:C3026_17785"/>
<dbReference type="PATRIC" id="fig|1411691.4.peg.3458"/>
<dbReference type="EchoBASE" id="EB2684"/>
<dbReference type="eggNOG" id="COG4597">
    <property type="taxonomic scope" value="Bacteria"/>
</dbReference>
<dbReference type="HOGENOM" id="CLU_019602_8_0_6"/>
<dbReference type="InParanoid" id="P45767"/>
<dbReference type="OMA" id="ILFWYFA"/>
<dbReference type="OrthoDB" id="9808531at2"/>
<dbReference type="PhylomeDB" id="P45767"/>
<dbReference type="BioCyc" id="EcoCyc:YHDX-MONOMER"/>
<dbReference type="PRO" id="PR:P45767"/>
<dbReference type="Proteomes" id="UP000000625">
    <property type="component" value="Chromosome"/>
</dbReference>
<dbReference type="GO" id="GO:0055052">
    <property type="term" value="C:ATP-binding cassette (ABC) transporter complex, substrate-binding subunit-containing"/>
    <property type="evidence" value="ECO:0000303"/>
    <property type="project" value="ComplexPortal"/>
</dbReference>
<dbReference type="GO" id="GO:0016020">
    <property type="term" value="C:membrane"/>
    <property type="evidence" value="ECO:0000303"/>
    <property type="project" value="ComplexPortal"/>
</dbReference>
<dbReference type="GO" id="GO:0005886">
    <property type="term" value="C:plasma membrane"/>
    <property type="evidence" value="ECO:0000314"/>
    <property type="project" value="EcoCyc"/>
</dbReference>
<dbReference type="GO" id="GO:0022857">
    <property type="term" value="F:transmembrane transporter activity"/>
    <property type="evidence" value="ECO:0007669"/>
    <property type="project" value="InterPro"/>
</dbReference>
<dbReference type="GO" id="GO:0006865">
    <property type="term" value="P:amino acid transport"/>
    <property type="evidence" value="ECO:0000318"/>
    <property type="project" value="GO_Central"/>
</dbReference>
<dbReference type="GO" id="GO:0015833">
    <property type="term" value="P:peptide transport"/>
    <property type="evidence" value="ECO:0000303"/>
    <property type="project" value="ComplexPortal"/>
</dbReference>
<dbReference type="CDD" id="cd06261">
    <property type="entry name" value="TM_PBP2"/>
    <property type="match status" value="1"/>
</dbReference>
<dbReference type="FunFam" id="1.10.3720.10:FF:000047">
    <property type="entry name" value="Amino acid ABC transporter, permease protein"/>
    <property type="match status" value="1"/>
</dbReference>
<dbReference type="FunFam" id="1.10.3720.10:FF:000051">
    <property type="entry name" value="Amino acid ABC transporter, permease protein"/>
    <property type="match status" value="1"/>
</dbReference>
<dbReference type="Gene3D" id="1.10.3720.10">
    <property type="entry name" value="MetI-like"/>
    <property type="match status" value="2"/>
</dbReference>
<dbReference type="InterPro" id="IPR010065">
    <property type="entry name" value="AA_ABC_transptr_permease_3TM"/>
</dbReference>
<dbReference type="InterPro" id="IPR043429">
    <property type="entry name" value="ArtM/GltK/GlnP/TcyL/YhdX-like"/>
</dbReference>
<dbReference type="InterPro" id="IPR000515">
    <property type="entry name" value="MetI-like"/>
</dbReference>
<dbReference type="InterPro" id="IPR035906">
    <property type="entry name" value="MetI-like_sf"/>
</dbReference>
<dbReference type="NCBIfam" id="TIGR01726">
    <property type="entry name" value="HEQRo_perm_3TM"/>
    <property type="match status" value="1"/>
</dbReference>
<dbReference type="PANTHER" id="PTHR30614:SF37">
    <property type="entry name" value="AMINO-ACID ABC TRANSPORTER PERMEASE PROTEIN YHDX-RELATED"/>
    <property type="match status" value="1"/>
</dbReference>
<dbReference type="PANTHER" id="PTHR30614">
    <property type="entry name" value="MEMBRANE COMPONENT OF AMINO ACID ABC TRANSPORTER"/>
    <property type="match status" value="1"/>
</dbReference>
<dbReference type="Pfam" id="PF00528">
    <property type="entry name" value="BPD_transp_1"/>
    <property type="match status" value="1"/>
</dbReference>
<dbReference type="SUPFAM" id="SSF161098">
    <property type="entry name" value="MetI-like"/>
    <property type="match status" value="2"/>
</dbReference>
<dbReference type="PROSITE" id="PS50928">
    <property type="entry name" value="ABC_TM1"/>
    <property type="match status" value="1"/>
</dbReference>
<reference key="1">
    <citation type="journal article" date="1997" name="Science">
        <title>The complete genome sequence of Escherichia coli K-12.</title>
        <authorList>
            <person name="Blattner F.R."/>
            <person name="Plunkett G. III"/>
            <person name="Bloch C.A."/>
            <person name="Perna N.T."/>
            <person name="Burland V."/>
            <person name="Riley M."/>
            <person name="Collado-Vides J."/>
            <person name="Glasner J.D."/>
            <person name="Rode C.K."/>
            <person name="Mayhew G.F."/>
            <person name="Gregor J."/>
            <person name="Davis N.W."/>
            <person name="Kirkpatrick H.A."/>
            <person name="Goeden M.A."/>
            <person name="Rose D.J."/>
            <person name="Mau B."/>
            <person name="Shao Y."/>
        </authorList>
    </citation>
    <scope>NUCLEOTIDE SEQUENCE [LARGE SCALE GENOMIC DNA]</scope>
    <source>
        <strain>K12 / MG1655 / ATCC 47076</strain>
    </source>
</reference>
<reference key="2">
    <citation type="journal article" date="2006" name="Nucleic Acids Res.">
        <title>Escherichia coli K-12: a cooperatively developed annotation snapshot -- 2005.</title>
        <authorList>
            <person name="Riley M."/>
            <person name="Abe T."/>
            <person name="Arnaud M.B."/>
            <person name="Berlyn M.K.B."/>
            <person name="Blattner F.R."/>
            <person name="Chaudhuri R.R."/>
            <person name="Glasner J.D."/>
            <person name="Horiuchi T."/>
            <person name="Keseler I.M."/>
            <person name="Kosuge T."/>
            <person name="Mori H."/>
            <person name="Perna N.T."/>
            <person name="Plunkett G. III"/>
            <person name="Rudd K.E."/>
            <person name="Serres M.H."/>
            <person name="Thomas G.H."/>
            <person name="Thomson N.R."/>
            <person name="Wishart D."/>
            <person name="Wanner B.L."/>
        </authorList>
    </citation>
    <scope>SEQUENCE REVISION</scope>
</reference>
<reference key="3">
    <citation type="journal article" date="2006" name="Mol. Syst. Biol.">
        <title>Highly accurate genome sequences of Escherichia coli K-12 strains MG1655 and W3110.</title>
        <authorList>
            <person name="Hayashi K."/>
            <person name="Morooka N."/>
            <person name="Yamamoto Y."/>
            <person name="Fujita K."/>
            <person name="Isono K."/>
            <person name="Choi S."/>
            <person name="Ohtsubo E."/>
            <person name="Baba T."/>
            <person name="Wanner B.L."/>
            <person name="Mori H."/>
            <person name="Horiuchi T."/>
        </authorList>
    </citation>
    <scope>NUCLEOTIDE SEQUENCE [LARGE SCALE GENOMIC DNA]</scope>
    <source>
        <strain>K12 / W3110 / ATCC 27325 / DSM 5911</strain>
    </source>
</reference>